<keyword id="KW-0106">Calcium</keyword>
<keyword id="KW-0186">Copper</keyword>
<keyword id="KW-0249">Electron transport</keyword>
<keyword id="KW-0349">Heme</keyword>
<keyword id="KW-0408">Iron</keyword>
<keyword id="KW-0472">Membrane</keyword>
<keyword id="KW-0479">Metal-binding</keyword>
<keyword id="KW-0496">Mitochondrion</keyword>
<keyword id="KW-0999">Mitochondrion inner membrane</keyword>
<keyword id="KW-0679">Respiratory chain</keyword>
<keyword id="KW-1278">Translocase</keyword>
<keyword id="KW-0812">Transmembrane</keyword>
<keyword id="KW-1133">Transmembrane helix</keyword>
<keyword id="KW-0813">Transport</keyword>
<evidence type="ECO:0000250" key="1">
    <source>
        <dbReference type="UniProtKB" id="P00401"/>
    </source>
</evidence>
<evidence type="ECO:0000255" key="2"/>
<evidence type="ECO:0000305" key="3"/>
<reference key="1">
    <citation type="submission" date="1999-01" db="EMBL/GenBank/DDBJ databases">
        <title>On bivalve phylogeny: a high-level phylogeny of the mollusk class Bivalvia based on a combined analysis of morphology and DNA sequence data.</title>
        <authorList>
            <person name="Giribet G."/>
            <person name="Wheeler W.C."/>
        </authorList>
    </citation>
    <scope>NUCLEOTIDE SEQUENCE [GENOMIC DNA]</scope>
</reference>
<reference key="2">
    <citation type="journal article" date="1999" name="Bull. Mar. Sci.">
        <title>Phylogenetic analysis of cytochrome c oxidase I sequences to determine higher-level relationships within the coleoid cephalopods.</title>
        <authorList>
            <person name="Carlini D.B."/>
            <person name="Graves J.E."/>
        </authorList>
    </citation>
    <scope>NUCLEOTIDE SEQUENCE [GENOMIC DNA] OF 3-221</scope>
</reference>
<reference key="3">
    <citation type="submission" date="1999-11" db="EMBL/GenBank/DDBJ databases">
        <title>Phylogeography of two Loligo squid (Cephalopoda: Myopsida) in the Gulf of Mexico and the northwestern Atlantic Ocean.</title>
        <authorList>
            <person name="Herke S.W."/>
            <person name="Foltz D.W."/>
        </authorList>
    </citation>
    <scope>NUCLEOTIDE SEQUENCE [GENOMIC DNA] OF 3-221</scope>
    <source>
        <strain>Isolate A-A128</strain>
        <strain>Isolate A-R1</strain>
        <strain>Isolate B-A25</strain>
        <strain>Isolate B-B233</strain>
        <strain>Isolate B-C13</strain>
        <strain>Isolate B-R11</strain>
        <strain>Isolate B-R59</strain>
        <strain>Isolate C-A52</strain>
        <strain>Isolate D-R2</strain>
        <strain>Isolate E-A55</strain>
        <strain>Isolate F-C70</strain>
        <strain>Isolate G-B35</strain>
        <strain>Isolate G-R46</strain>
        <strain>Isolate H-A123</strain>
        <strain>Isolate H-A80</strain>
        <strain>Isolate H-S26</strain>
        <strain>Isolate I-C7</strain>
        <strain>Isolate J-C39</strain>
        <strain>Isolate K-A92</strain>
        <strain>Isolate L-A63</strain>
        <strain>Isolate M-C50</strain>
    </source>
</reference>
<reference key="4">
    <citation type="submission" date="2001-06" db="EMBL/GenBank/DDBJ databases">
        <title>Phylogeography of two squid (Loligo pealei and L. plei) in the Gulf of Mexico and Northwestern Atlantic Ocean.</title>
        <authorList>
            <person name="Herke S.W."/>
            <person name="Foltz D.W."/>
        </authorList>
    </citation>
    <scope>NUCLEOTIDE SEQUENCE [GENOMIC DNA] OF 3-221</scope>
    <source>
        <strain>Isolate B-B233</strain>
        <strain>Isolate B-C13</strain>
        <strain>Isolate B-R59</strain>
    </source>
</reference>
<name>COX1_DORPE</name>
<comment type="function">
    <text evidence="1">Component of the cytochrome c oxidase, the last enzyme in the mitochondrial electron transport chain which drives oxidative phosphorylation. The respiratory chain contains 3 multisubunit complexes succinate dehydrogenase (complex II, CII), ubiquinol-cytochrome c oxidoreductase (cytochrome b-c1 complex, complex III, CIII) and cytochrome c oxidase (complex IV, CIV), that cooperate to transfer electrons derived from NADH and succinate to molecular oxygen, creating an electrochemical gradient over the inner membrane that drives transmembrane transport and the ATP synthase. Cytochrome c oxidase is the component of the respiratory chain that catalyzes the reduction of oxygen to water. Electrons originating from reduced cytochrome c in the intermembrane space (IMS) are transferred via the dinuclear copper A center (CU(A)) of subunit 2 and heme A of subunit 1 to the active site in subunit 1, a binuclear center (BNC) formed by heme A3 and copper B (CU(B)). The BNC reduces molecular oxygen to 2 water molecules using 4 electrons from cytochrome c in the IMS and 4 protons from the mitochondrial matrix.</text>
</comment>
<comment type="catalytic activity">
    <reaction evidence="1">
        <text>4 Fe(II)-[cytochrome c] + O2 + 8 H(+)(in) = 4 Fe(III)-[cytochrome c] + 2 H2O + 4 H(+)(out)</text>
        <dbReference type="Rhea" id="RHEA:11436"/>
        <dbReference type="Rhea" id="RHEA-COMP:10350"/>
        <dbReference type="Rhea" id="RHEA-COMP:14399"/>
        <dbReference type="ChEBI" id="CHEBI:15377"/>
        <dbReference type="ChEBI" id="CHEBI:15378"/>
        <dbReference type="ChEBI" id="CHEBI:15379"/>
        <dbReference type="ChEBI" id="CHEBI:29033"/>
        <dbReference type="ChEBI" id="CHEBI:29034"/>
        <dbReference type="EC" id="7.1.1.9"/>
    </reaction>
    <physiologicalReaction direction="left-to-right" evidence="1">
        <dbReference type="Rhea" id="RHEA:11437"/>
    </physiologicalReaction>
</comment>
<comment type="cofactor">
    <cofactor evidence="1">
        <name>heme</name>
        <dbReference type="ChEBI" id="CHEBI:30413"/>
    </cofactor>
    <text evidence="1">Binds 2 heme A groups non-covalently per subunit.</text>
</comment>
<comment type="cofactor">
    <cofactor evidence="1">
        <name>Cu cation</name>
        <dbReference type="ChEBI" id="CHEBI:23378"/>
    </cofactor>
    <text evidence="1">Binds a copper B center.</text>
</comment>
<comment type="pathway">
    <text evidence="1">Energy metabolism; oxidative phosphorylation.</text>
</comment>
<comment type="subunit">
    <text evidence="1">Component of the cytochrome c oxidase (complex IV, CIV), a multisubunit enzyme composed of a catalytic core of 3 subunits and several supernumerary subunits. The complex exists as a monomer or a dimer and forms supercomplexes (SCs) in the inner mitochondrial membrane with ubiquinol-cytochrome c oxidoreductase (cytochrome b-c1 complex, complex III, CIII).</text>
</comment>
<comment type="subcellular location">
    <subcellularLocation>
        <location evidence="1">Mitochondrion inner membrane</location>
        <topology evidence="1">Multi-pass membrane protein</topology>
    </subcellularLocation>
</comment>
<comment type="similarity">
    <text evidence="3">Belongs to the heme-copper respiratory oxidase family.</text>
</comment>
<organism>
    <name type="scientific">Doryteuthis pealeii</name>
    <name type="common">Longfin inshore squid</name>
    <name type="synonym">Loligo pealeii</name>
    <dbReference type="NCBI Taxonomy" id="1051067"/>
    <lineage>
        <taxon>Eukaryota</taxon>
        <taxon>Metazoa</taxon>
        <taxon>Spiralia</taxon>
        <taxon>Lophotrochozoa</taxon>
        <taxon>Mollusca</taxon>
        <taxon>Cephalopoda</taxon>
        <taxon>Coleoidea</taxon>
        <taxon>Decapodiformes</taxon>
        <taxon>Myopsida</taxon>
        <taxon>Loliginidae</taxon>
        <taxon>Doryteuthis</taxon>
    </lineage>
</organism>
<proteinExistence type="inferred from homology"/>
<geneLocation type="mitochondrion"/>
<protein>
    <recommendedName>
        <fullName>Cytochrome c oxidase subunit 1</fullName>
        <ecNumber>7.1.1.9</ecNumber>
    </recommendedName>
    <alternativeName>
        <fullName>Cytochrome c oxidase polypeptide I</fullName>
    </alternativeName>
</protein>
<accession>Q8WEW4</accession>
<accession>Q9ZYZ9</accession>
<gene>
    <name type="primary">COI</name>
</gene>
<feature type="chain" id="PRO_0000183356" description="Cytochrome c oxidase subunit 1">
    <location>
        <begin position="1" status="less than"/>
        <end position="223" status="greater than"/>
    </location>
</feature>
<feature type="topological domain" description="Mitochondrial matrix" evidence="2">
    <location>
        <begin position="1" status="less than"/>
        <end position="4"/>
    </location>
</feature>
<feature type="transmembrane region" description="Helical; Name=1" evidence="2">
    <location>
        <begin position="5"/>
        <end position="27"/>
    </location>
</feature>
<feature type="topological domain" description="Mitochondrial intermembrane" evidence="2">
    <location>
        <begin position="28"/>
        <end position="46"/>
    </location>
</feature>
<feature type="transmembrane region" description="Helical; Name=2" evidence="2">
    <location>
        <begin position="47"/>
        <end position="69"/>
    </location>
</feature>
<feature type="topological domain" description="Mitochondrial matrix" evidence="2">
    <location>
        <begin position="70"/>
        <end position="88"/>
    </location>
</feature>
<feature type="transmembrane region" description="Helical; Name=3" evidence="2">
    <location>
        <begin position="89"/>
        <end position="111"/>
    </location>
</feature>
<feature type="topological domain" description="Mitochondrial intermembrane" evidence="2">
    <location>
        <begin position="112"/>
        <end position="130"/>
    </location>
</feature>
<feature type="transmembrane region" description="Helical; Name=4" evidence="2">
    <location>
        <begin position="131"/>
        <end position="153"/>
    </location>
</feature>
<feature type="topological domain" description="Mitochondrial matrix" evidence="2">
    <location>
        <begin position="154"/>
        <end position="173"/>
    </location>
</feature>
<feature type="transmembrane region" description="Helical; Name=5" evidence="2">
    <location>
        <begin position="174"/>
        <end position="196"/>
    </location>
</feature>
<feature type="binding site" evidence="1">
    <location>
        <position position="26"/>
    </location>
    <ligand>
        <name>Ca(2+)</name>
        <dbReference type="ChEBI" id="CHEBI:29108"/>
    </ligand>
</feature>
<feature type="binding site" evidence="1">
    <location>
        <position position="31"/>
    </location>
    <ligand>
        <name>Ca(2+)</name>
        <dbReference type="ChEBI" id="CHEBI:29108"/>
    </ligand>
</feature>
<feature type="binding site" description="axial binding residue" evidence="1">
    <location>
        <position position="47"/>
    </location>
    <ligand>
        <name>Fe(II)-heme a</name>
        <dbReference type="ChEBI" id="CHEBI:61715"/>
        <note>low-spin</note>
    </ligand>
    <ligandPart>
        <name>Fe</name>
        <dbReference type="ChEBI" id="CHEBI:18248"/>
    </ligandPart>
</feature>
<feature type="non-terminal residue">
    <location>
        <position position="1"/>
    </location>
</feature>
<feature type="non-terminal residue">
    <location>
        <position position="223"/>
    </location>
</feature>
<dbReference type="EC" id="7.1.1.9"/>
<dbReference type="EMBL" id="AF120629">
    <property type="protein sequence ID" value="AAL55479.1"/>
    <property type="molecule type" value="Genomic_DNA"/>
</dbReference>
<dbReference type="EMBL" id="AF000052">
    <property type="protein sequence ID" value="AAC95097.1"/>
    <property type="molecule type" value="Genomic_DNA"/>
</dbReference>
<dbReference type="EMBL" id="AF207923">
    <property type="protein sequence ID" value="AAF20964.1"/>
    <property type="molecule type" value="Genomic_DNA"/>
</dbReference>
<dbReference type="EMBL" id="AF207909">
    <property type="protein sequence ID" value="AAF20950.1"/>
    <property type="molecule type" value="Genomic_DNA"/>
</dbReference>
<dbReference type="EMBL" id="AF207910">
    <property type="protein sequence ID" value="AAF20951.1"/>
    <property type="molecule type" value="Genomic_DNA"/>
</dbReference>
<dbReference type="EMBL" id="AF207911">
    <property type="protein sequence ID" value="AAF20952.1"/>
    <property type="molecule type" value="Genomic_DNA"/>
</dbReference>
<dbReference type="EMBL" id="AF207912">
    <property type="protein sequence ID" value="AAF20953.1"/>
    <property type="molecule type" value="Genomic_DNA"/>
</dbReference>
<dbReference type="EMBL" id="AF207913">
    <property type="protein sequence ID" value="AAF20954.1"/>
    <property type="molecule type" value="Genomic_DNA"/>
</dbReference>
<dbReference type="EMBL" id="AF207914">
    <property type="protein sequence ID" value="AAF20955.1"/>
    <property type="molecule type" value="Genomic_DNA"/>
</dbReference>
<dbReference type="EMBL" id="AF207915">
    <property type="protein sequence ID" value="AAF20956.1"/>
    <property type="molecule type" value="Genomic_DNA"/>
</dbReference>
<dbReference type="EMBL" id="AF207916">
    <property type="protein sequence ID" value="AAF20957.1"/>
    <property type="molecule type" value="Genomic_DNA"/>
</dbReference>
<dbReference type="EMBL" id="AF207917">
    <property type="protein sequence ID" value="AAF20958.1"/>
    <property type="molecule type" value="Genomic_DNA"/>
</dbReference>
<dbReference type="EMBL" id="AF207918">
    <property type="protein sequence ID" value="AAF20959.1"/>
    <property type="molecule type" value="Genomic_DNA"/>
</dbReference>
<dbReference type="EMBL" id="AF207919">
    <property type="protein sequence ID" value="AAF20960.1"/>
    <property type="molecule type" value="Genomic_DNA"/>
</dbReference>
<dbReference type="EMBL" id="AF207920">
    <property type="protein sequence ID" value="AAF20961.1"/>
    <property type="molecule type" value="Genomic_DNA"/>
</dbReference>
<dbReference type="EMBL" id="AF207921">
    <property type="protein sequence ID" value="AAF20962.1"/>
    <property type="molecule type" value="Genomic_DNA"/>
</dbReference>
<dbReference type="EMBL" id="AF207922">
    <property type="protein sequence ID" value="AAF20963.1"/>
    <property type="molecule type" value="Genomic_DNA"/>
</dbReference>
<dbReference type="EMBL" id="AF207924">
    <property type="protein sequence ID" value="AAF20965.1"/>
    <property type="molecule type" value="Genomic_DNA"/>
</dbReference>
<dbReference type="EMBL" id="AF207925">
    <property type="protein sequence ID" value="AAF20966.1"/>
    <property type="molecule type" value="Genomic_DNA"/>
</dbReference>
<dbReference type="EMBL" id="AF207926">
    <property type="protein sequence ID" value="AAF20967.1"/>
    <property type="molecule type" value="Genomic_DNA"/>
</dbReference>
<dbReference type="EMBL" id="AY039621">
    <property type="protein sequence ID" value="AAK73250.1"/>
    <property type="molecule type" value="Genomic_DNA"/>
</dbReference>
<dbReference type="EMBL" id="AY039622">
    <property type="protein sequence ID" value="AAK73251.1"/>
    <property type="molecule type" value="Genomic_DNA"/>
</dbReference>
<dbReference type="EMBL" id="AY039623">
    <property type="protein sequence ID" value="AAK73252.1"/>
    <property type="molecule type" value="Genomic_DNA"/>
</dbReference>
<dbReference type="SMR" id="Q8WEW4"/>
<dbReference type="UniPathway" id="UPA00705"/>
<dbReference type="GO" id="GO:0005743">
    <property type="term" value="C:mitochondrial inner membrane"/>
    <property type="evidence" value="ECO:0007669"/>
    <property type="project" value="UniProtKB-SubCell"/>
</dbReference>
<dbReference type="GO" id="GO:0004129">
    <property type="term" value="F:cytochrome-c oxidase activity"/>
    <property type="evidence" value="ECO:0007669"/>
    <property type="project" value="UniProtKB-EC"/>
</dbReference>
<dbReference type="GO" id="GO:0020037">
    <property type="term" value="F:heme binding"/>
    <property type="evidence" value="ECO:0007669"/>
    <property type="project" value="InterPro"/>
</dbReference>
<dbReference type="GO" id="GO:0046872">
    <property type="term" value="F:metal ion binding"/>
    <property type="evidence" value="ECO:0007669"/>
    <property type="project" value="UniProtKB-KW"/>
</dbReference>
<dbReference type="GO" id="GO:0015990">
    <property type="term" value="P:electron transport coupled proton transport"/>
    <property type="evidence" value="ECO:0007669"/>
    <property type="project" value="TreeGrafter"/>
</dbReference>
<dbReference type="GO" id="GO:0006123">
    <property type="term" value="P:mitochondrial electron transport, cytochrome c to oxygen"/>
    <property type="evidence" value="ECO:0007669"/>
    <property type="project" value="TreeGrafter"/>
</dbReference>
<dbReference type="Gene3D" id="1.20.210.10">
    <property type="entry name" value="Cytochrome c oxidase-like, subunit I domain"/>
    <property type="match status" value="1"/>
</dbReference>
<dbReference type="InterPro" id="IPR023616">
    <property type="entry name" value="Cyt_c_oxase-like_su1_dom"/>
</dbReference>
<dbReference type="InterPro" id="IPR036927">
    <property type="entry name" value="Cyt_c_oxase-like_su1_sf"/>
</dbReference>
<dbReference type="InterPro" id="IPR000883">
    <property type="entry name" value="Cyt_C_Oxase_1"/>
</dbReference>
<dbReference type="PANTHER" id="PTHR10422">
    <property type="entry name" value="CYTOCHROME C OXIDASE SUBUNIT 1"/>
    <property type="match status" value="1"/>
</dbReference>
<dbReference type="PANTHER" id="PTHR10422:SF18">
    <property type="entry name" value="CYTOCHROME C OXIDASE SUBUNIT 1"/>
    <property type="match status" value="1"/>
</dbReference>
<dbReference type="Pfam" id="PF00115">
    <property type="entry name" value="COX1"/>
    <property type="match status" value="1"/>
</dbReference>
<dbReference type="PRINTS" id="PR01165">
    <property type="entry name" value="CYCOXIDASEI"/>
</dbReference>
<dbReference type="SUPFAM" id="SSF81442">
    <property type="entry name" value="Cytochrome c oxidase subunit I-like"/>
    <property type="match status" value="1"/>
</dbReference>
<dbReference type="PROSITE" id="PS50855">
    <property type="entry name" value="COX1"/>
    <property type="match status" value="1"/>
</dbReference>
<sequence>IGTLYFMFGIWAGLVGTSLSLMIRTELGKPGSLLNDDQLYNVVVTAHGFIMIFFMVMPIMIGGFGNWLVPLMLGAPDMAFPRMNNMSFWLLPPSLTLLLASSAVESGAGTGWTVYPPLSSNLSHAGPSVDLAIFSLHLAGISSILGAINFITTIMNMRWEGLLMERLSLFVWSVFITAILLLLSLPVLAGAITMLLTDRNFNTTFFDPSGGGDPILYQHLFWF</sequence>